<accession>O55028</accession>
<proteinExistence type="evidence at protein level"/>
<comment type="function">
    <text evidence="2">Serine/threonine-protein kinase component of macronutrients metabolism. Forms a functional kinase and phosphatase pair with PPM1K, serving as a metabolic regulatory node that coordinates branched-chain amino acids (BCAAs) with glucose and lipid metabolism via two distinct phosphoprotein targets: mitochondrial BCKDHA subunit of the branched-chain alpha-ketoacid dehydrogenase (BCKDH) complex and cytosolic ACLY, a lipogenic enzyme of Krebs cycle (By similarity). Phosphorylates and inactivates mitochondrial BCKDH complex a multisubunit complex consisting of three multimeric components each involved in different steps of BCAA catabolism: E1 composed of BCKDHA and BCKDHB, E2 core composed of DBT monomers, and E3 composed of DLD monomers. Associates with the E2 component of BCKDH complex and phosphorylates BCKDHA on Ser-334, leading to conformational changes that interrupt substrate channeling between E1 and E2 and inactivates the BCKDH complex (By similarity). Phosphorylates ACLY on Ser-455 in response to changes in cellular carbohydrate abundance such as occurs during fasting to feeding metabolic transition. Refeeding stimulates MLXIPL/ChREBP transcription factor, leading to increased BCKDK to PPM1K expression ratio, phosphorylation and activation of ACLY that ultimately results in the generation of malonyl-CoA and oxaloacetate immediate substrates of de novo lipogenesis and glucogenesis, respectively (By similarity). Recognizes phosphosites having SxxE/D canonical motif (By similarity).</text>
</comment>
<comment type="catalytic activity">
    <reaction evidence="2">
        <text>L-seryl-[3-methyl-2-oxobutanoate dehydrogenase] + ATP = O-phospho-L-seryl-[3-methyl-2-oxobutanoate dehydrogenase] + ADP + H(+)</text>
        <dbReference type="Rhea" id="RHEA:17301"/>
        <dbReference type="Rhea" id="RHEA-COMP:13695"/>
        <dbReference type="Rhea" id="RHEA-COMP:13696"/>
        <dbReference type="ChEBI" id="CHEBI:15378"/>
        <dbReference type="ChEBI" id="CHEBI:29999"/>
        <dbReference type="ChEBI" id="CHEBI:30616"/>
        <dbReference type="ChEBI" id="CHEBI:83421"/>
        <dbReference type="ChEBI" id="CHEBI:456216"/>
        <dbReference type="EC" id="2.7.11.4"/>
    </reaction>
    <physiologicalReaction direction="left-to-right" evidence="2">
        <dbReference type="Rhea" id="RHEA:17302"/>
    </physiologicalReaction>
</comment>
<comment type="catalytic activity">
    <reaction evidence="2">
        <text>L-seryl-[protein] + ATP = O-phospho-L-seryl-[protein] + ADP + H(+)</text>
        <dbReference type="Rhea" id="RHEA:17989"/>
        <dbReference type="Rhea" id="RHEA-COMP:9863"/>
        <dbReference type="Rhea" id="RHEA-COMP:11604"/>
        <dbReference type="ChEBI" id="CHEBI:15378"/>
        <dbReference type="ChEBI" id="CHEBI:29999"/>
        <dbReference type="ChEBI" id="CHEBI:30616"/>
        <dbReference type="ChEBI" id="CHEBI:83421"/>
        <dbReference type="ChEBI" id="CHEBI:456216"/>
        <dbReference type="EC" id="2.7.11.1"/>
    </reaction>
    <physiologicalReaction direction="left-to-right" evidence="2">
        <dbReference type="Rhea" id="RHEA:17990"/>
    </physiologicalReaction>
</comment>
<comment type="subunit">
    <text evidence="2 3">Homodimer. Homotetramer (By similarity). Dimerizes through interaction of two opposing nucleotide-binding domains. Interacts with E2 component of the branched-chain alpha-ketoacid dehydrogenase (BCKDH) complex. Competes with BCKDK for binding to the E2 component; this interaction is modulated by branched-chain alpha-keto acids. At steady state, BCKDH holoenzyme contains BCKDK and BCKDHA is phosphorylated. In response to high levels of branched-chain alpha-keto acids, the inhibitory BCKDK is replaced by activating PPM1K leading to BCKDHA dephosphorylation and BCAA degradation (By similarity).</text>
</comment>
<comment type="subcellular location">
    <subcellularLocation>
        <location>Mitochondrion matrix</location>
    </subcellularLocation>
    <subcellularLocation>
        <location evidence="2">Mitochondrion</location>
    </subcellularLocation>
</comment>
<comment type="tissue specificity">
    <text>Ubiquitous.</text>
</comment>
<comment type="induction">
    <text>Expression in female liver is influenced by circadian rhythm.</text>
</comment>
<comment type="PTM">
    <text evidence="2">Autophosphorylated.</text>
</comment>
<comment type="disruption phenotype">
    <text evidence="5 6">Mutant animals are born at the expected Mendelian ratio, but they exhibit a decreased fertility. They are healthy at birth. At 3 weeks of age, they start showing growth retardation. At 12 weeks, they are 15% smaller than their wild-type littermates. Adults develop neurological abnormalities, such as tremors, epileptic seizures and hindlimb clasping. These neurological deficits can be completely abolished when mice are fed with a diet enriched in branched amino acids.</text>
</comment>
<comment type="similarity">
    <text evidence="7">Belongs to the PDK/BCKDK protein kinase family.</text>
</comment>
<protein>
    <recommendedName>
        <fullName evidence="2">Branched-chain alpha-ketoacid dehydrogenase kinase</fullName>
        <shortName evidence="2">BCKDH kinase</shortName>
        <shortName>BCKDHKIN</shortName>
        <shortName evidence="2">BDK</shortName>
        <ecNumber evidence="2">2.7.11.1</ecNumber>
    </recommendedName>
    <alternativeName>
        <fullName>[3-methyl-2-oxobutanoate dehydrogenase [lipoamide]] kinase, mitochondrial</fullName>
        <ecNumber evidence="2">2.7.11.4</ecNumber>
    </alternativeName>
</protein>
<gene>
    <name type="primary">Bckdk</name>
</gene>
<keyword id="KW-0007">Acetylation</keyword>
<keyword id="KW-0067">ATP-binding</keyword>
<keyword id="KW-0418">Kinase</keyword>
<keyword id="KW-0460">Magnesium</keyword>
<keyword id="KW-0479">Metal-binding</keyword>
<keyword id="KW-0496">Mitochondrion</keyword>
<keyword id="KW-0547">Nucleotide-binding</keyword>
<keyword id="KW-0597">Phosphoprotein</keyword>
<keyword id="KW-0630">Potassium</keyword>
<keyword id="KW-1185">Reference proteome</keyword>
<keyword id="KW-0808">Transferase</keyword>
<keyword id="KW-0809">Transit peptide</keyword>
<dbReference type="EC" id="2.7.11.1" evidence="2"/>
<dbReference type="EC" id="2.7.11.4" evidence="2"/>
<dbReference type="EMBL" id="AF043070">
    <property type="protein sequence ID" value="AAB97689.1"/>
    <property type="molecule type" value="mRNA"/>
</dbReference>
<dbReference type="EMBL" id="BC046595">
    <property type="protein sequence ID" value="AAH46595.1"/>
    <property type="molecule type" value="mRNA"/>
</dbReference>
<dbReference type="CCDS" id="CCDS21884.1"/>
<dbReference type="RefSeq" id="NP_033869.1">
    <property type="nucleotide sequence ID" value="NM_009739.3"/>
</dbReference>
<dbReference type="SMR" id="O55028"/>
<dbReference type="BioGRID" id="198316">
    <property type="interactions" value="31"/>
</dbReference>
<dbReference type="FunCoup" id="O55028">
    <property type="interactions" value="863"/>
</dbReference>
<dbReference type="STRING" id="10090.ENSMUSP00000070345"/>
<dbReference type="GlyGen" id="O55028">
    <property type="glycosylation" value="2 sites, 1 O-linked glycan (2 sites)"/>
</dbReference>
<dbReference type="iPTMnet" id="O55028"/>
<dbReference type="PhosphoSitePlus" id="O55028"/>
<dbReference type="jPOST" id="O55028"/>
<dbReference type="PaxDb" id="10090-ENSMUSP00000070345"/>
<dbReference type="PeptideAtlas" id="O55028"/>
<dbReference type="ProteomicsDB" id="273737"/>
<dbReference type="Pumba" id="O55028"/>
<dbReference type="Antibodypedia" id="13936">
    <property type="antibodies" value="354 antibodies from 31 providers"/>
</dbReference>
<dbReference type="DNASU" id="12041"/>
<dbReference type="Ensembl" id="ENSMUST00000071056.14">
    <property type="protein sequence ID" value="ENSMUSP00000070345.8"/>
    <property type="gene ID" value="ENSMUSG00000030802.15"/>
</dbReference>
<dbReference type="GeneID" id="12041"/>
<dbReference type="KEGG" id="mmu:12041"/>
<dbReference type="UCSC" id="uc009jxf.1">
    <property type="organism name" value="mouse"/>
</dbReference>
<dbReference type="AGR" id="MGI:1276121"/>
<dbReference type="CTD" id="10295"/>
<dbReference type="MGI" id="MGI:1276121">
    <property type="gene designation" value="Bckdk"/>
</dbReference>
<dbReference type="VEuPathDB" id="HostDB:ENSMUSG00000030802"/>
<dbReference type="eggNOG" id="KOG0787">
    <property type="taxonomic scope" value="Eukaryota"/>
</dbReference>
<dbReference type="GeneTree" id="ENSGT01030000234646"/>
<dbReference type="HOGENOM" id="CLU_023861_4_0_1"/>
<dbReference type="InParanoid" id="O55028"/>
<dbReference type="OMA" id="WSYPPSA"/>
<dbReference type="OrthoDB" id="3264224at2759"/>
<dbReference type="PhylomeDB" id="O55028"/>
<dbReference type="TreeFam" id="TF331303"/>
<dbReference type="BRENDA" id="2.7.11.4">
    <property type="organism ID" value="3474"/>
</dbReference>
<dbReference type="Reactome" id="R-MMU-70895">
    <property type="pathway name" value="Branched-chain amino acid catabolism"/>
</dbReference>
<dbReference type="BioGRID-ORCS" id="12041">
    <property type="hits" value="2 hits in 80 CRISPR screens"/>
</dbReference>
<dbReference type="CD-CODE" id="CE726F99">
    <property type="entry name" value="Postsynaptic density"/>
</dbReference>
<dbReference type="ChiTaRS" id="Bckdk">
    <property type="organism name" value="mouse"/>
</dbReference>
<dbReference type="PRO" id="PR:O55028"/>
<dbReference type="Proteomes" id="UP000000589">
    <property type="component" value="Chromosome 7"/>
</dbReference>
<dbReference type="RNAct" id="O55028">
    <property type="molecule type" value="protein"/>
</dbReference>
<dbReference type="Bgee" id="ENSMUSG00000030802">
    <property type="expression patterns" value="Expressed in lacrimal gland and 266 other cell types or tissues"/>
</dbReference>
<dbReference type="ExpressionAtlas" id="O55028">
    <property type="expression patterns" value="baseline and differential"/>
</dbReference>
<dbReference type="GO" id="GO:0005759">
    <property type="term" value="C:mitochondrial matrix"/>
    <property type="evidence" value="ECO:0007669"/>
    <property type="project" value="UniProtKB-SubCell"/>
</dbReference>
<dbReference type="GO" id="GO:0005739">
    <property type="term" value="C:mitochondrion"/>
    <property type="evidence" value="ECO:0007005"/>
    <property type="project" value="MGI"/>
</dbReference>
<dbReference type="GO" id="GO:0045252">
    <property type="term" value="C:oxoglutarate dehydrogenase complex"/>
    <property type="evidence" value="ECO:0000250"/>
    <property type="project" value="HGNC-UCL"/>
</dbReference>
<dbReference type="GO" id="GO:0047323">
    <property type="term" value="F:[3-methyl-2-oxobutanoate dehydrogenase (acetyl-transferring)] kinase activity"/>
    <property type="evidence" value="ECO:0007669"/>
    <property type="project" value="UniProtKB-EC"/>
</dbReference>
<dbReference type="GO" id="GO:0005524">
    <property type="term" value="F:ATP binding"/>
    <property type="evidence" value="ECO:0000250"/>
    <property type="project" value="HGNC-UCL"/>
</dbReference>
<dbReference type="GO" id="GO:0046872">
    <property type="term" value="F:metal ion binding"/>
    <property type="evidence" value="ECO:0007669"/>
    <property type="project" value="UniProtKB-KW"/>
</dbReference>
<dbReference type="GO" id="GO:0004672">
    <property type="term" value="F:protein kinase activity"/>
    <property type="evidence" value="ECO:0000314"/>
    <property type="project" value="MGI"/>
</dbReference>
<dbReference type="GO" id="GO:0106310">
    <property type="term" value="F:protein serine kinase activity"/>
    <property type="evidence" value="ECO:0007669"/>
    <property type="project" value="RHEA"/>
</dbReference>
<dbReference type="GO" id="GO:0004674">
    <property type="term" value="F:protein serine/threonine kinase activity"/>
    <property type="evidence" value="ECO:0000250"/>
    <property type="project" value="HGNC-UCL"/>
</dbReference>
<dbReference type="GO" id="GO:0004722">
    <property type="term" value="F:protein serine/threonine phosphatase activity"/>
    <property type="evidence" value="ECO:0007669"/>
    <property type="project" value="Ensembl"/>
</dbReference>
<dbReference type="GO" id="GO:0009083">
    <property type="term" value="P:branched-chain amino acid catabolic process"/>
    <property type="evidence" value="ECO:0000250"/>
    <property type="project" value="HGNC-UCL"/>
</dbReference>
<dbReference type="GO" id="GO:0006550">
    <property type="term" value="P:isoleucine catabolic process"/>
    <property type="evidence" value="ECO:0007669"/>
    <property type="project" value="Ensembl"/>
</dbReference>
<dbReference type="GO" id="GO:0006552">
    <property type="term" value="P:L-leucine catabolic process"/>
    <property type="evidence" value="ECO:0007669"/>
    <property type="project" value="Ensembl"/>
</dbReference>
<dbReference type="GO" id="GO:0008610">
    <property type="term" value="P:lipid biosynthetic process"/>
    <property type="evidence" value="ECO:0007669"/>
    <property type="project" value="Ensembl"/>
</dbReference>
<dbReference type="GO" id="GO:0007283">
    <property type="term" value="P:spermatogenesis"/>
    <property type="evidence" value="ECO:0007669"/>
    <property type="project" value="Ensembl"/>
</dbReference>
<dbReference type="GO" id="GO:0006574">
    <property type="term" value="P:valine catabolic process"/>
    <property type="evidence" value="ECO:0007669"/>
    <property type="project" value="Ensembl"/>
</dbReference>
<dbReference type="CDD" id="cd16929">
    <property type="entry name" value="HATPase_PDK-like"/>
    <property type="match status" value="1"/>
</dbReference>
<dbReference type="FunFam" id="1.20.140.20:FF:000002">
    <property type="entry name" value="[3-methyl-2-oxobutanoate dehydrogenase [lipoamide]] kinase, mitochondrial"/>
    <property type="match status" value="1"/>
</dbReference>
<dbReference type="FunFam" id="3.30.565.10:FF:000051">
    <property type="entry name" value="[3-methyl-2-oxobutanoate dehydrogenase [lipoamide]] kinase, mitochondrial"/>
    <property type="match status" value="1"/>
</dbReference>
<dbReference type="Gene3D" id="1.20.140.20">
    <property type="entry name" value="Alpha-ketoacid/pyruvate dehydrogenase kinase, N-terminal domain"/>
    <property type="match status" value="1"/>
</dbReference>
<dbReference type="Gene3D" id="3.30.565.10">
    <property type="entry name" value="Histidine kinase-like ATPase, C-terminal domain"/>
    <property type="match status" value="1"/>
</dbReference>
<dbReference type="InterPro" id="IPR036784">
    <property type="entry name" value="AK/P_DHK_N_sf"/>
</dbReference>
<dbReference type="InterPro" id="IPR018955">
    <property type="entry name" value="BCDHK/PDK_N"/>
</dbReference>
<dbReference type="InterPro" id="IPR039028">
    <property type="entry name" value="BCKD/PDK"/>
</dbReference>
<dbReference type="InterPro" id="IPR036890">
    <property type="entry name" value="HATPase_C_sf"/>
</dbReference>
<dbReference type="InterPro" id="IPR005467">
    <property type="entry name" value="His_kinase_dom"/>
</dbReference>
<dbReference type="InterPro" id="IPR004358">
    <property type="entry name" value="Sig_transdc_His_kin-like_C"/>
</dbReference>
<dbReference type="PANTHER" id="PTHR11947:SF20">
    <property type="entry name" value="[3-METHYL-2-OXOBUTANOATE DEHYDROGENASE [LIPOAMIDE]] KINASE, MITOCHONDRIAL"/>
    <property type="match status" value="1"/>
</dbReference>
<dbReference type="PANTHER" id="PTHR11947">
    <property type="entry name" value="PYRUVATE DEHYDROGENASE KINASE"/>
    <property type="match status" value="1"/>
</dbReference>
<dbReference type="Pfam" id="PF10436">
    <property type="entry name" value="BCDHK_Adom3"/>
    <property type="match status" value="1"/>
</dbReference>
<dbReference type="Pfam" id="PF02518">
    <property type="entry name" value="HATPase_c"/>
    <property type="match status" value="1"/>
</dbReference>
<dbReference type="PRINTS" id="PR00344">
    <property type="entry name" value="BCTRLSENSOR"/>
</dbReference>
<dbReference type="SMART" id="SM00387">
    <property type="entry name" value="HATPase_c"/>
    <property type="match status" value="1"/>
</dbReference>
<dbReference type="SUPFAM" id="SSF69012">
    <property type="entry name" value="alpha-ketoacid dehydrogenase kinase, N-terminal domain"/>
    <property type="match status" value="1"/>
</dbReference>
<dbReference type="SUPFAM" id="SSF55874">
    <property type="entry name" value="ATPase domain of HSP90 chaperone/DNA topoisomerase II/histidine kinase"/>
    <property type="match status" value="1"/>
</dbReference>
<dbReference type="PROSITE" id="PS50109">
    <property type="entry name" value="HIS_KIN"/>
    <property type="match status" value="1"/>
</dbReference>
<reference key="1">
    <citation type="journal article" date="1998" name="Gene">
        <title>Murine branched chain alpha ketoacid dehydrogenase kinase; cDNA cloning, tissue distribution, and temporal expression during embryonic development.</title>
        <authorList>
            <person name="Doering C.B."/>
            <person name="Coursey C."/>
            <person name="Spangler W."/>
            <person name="Danner D.J."/>
        </authorList>
    </citation>
    <scope>NUCLEOTIDE SEQUENCE [MRNA]</scope>
    <source>
        <strain>C57BL/6J</strain>
    </source>
</reference>
<reference key="2">
    <citation type="journal article" date="2004" name="Genome Res.">
        <title>The status, quality, and expansion of the NIH full-length cDNA project: the Mammalian Gene Collection (MGC).</title>
        <authorList>
            <consortium name="The MGC Project Team"/>
        </authorList>
    </citation>
    <scope>NUCLEOTIDE SEQUENCE [LARGE SCALE MRNA]</scope>
    <source>
        <tissue>Olfactory epithelium</tissue>
    </source>
</reference>
<reference key="3">
    <citation type="journal article" date="2006" name="Biochem. J.">
        <title>Impaired growth and neurological abnormalities in branched-chain alpha-keto acid dehydrogenase kinase-deficient mice.</title>
        <authorList>
            <person name="Joshi M.A."/>
            <person name="Jeoung N.H."/>
            <person name="Obayashi M."/>
            <person name="Hattab E.M."/>
            <person name="Brocken E.G."/>
            <person name="Liechty E.A."/>
            <person name="Kubek M.J."/>
            <person name="Vattem K.M."/>
            <person name="Wek R.C."/>
            <person name="Harris R.A."/>
        </authorList>
    </citation>
    <scope>DISRUPTION PHENOTYPE</scope>
</reference>
<reference key="4">
    <citation type="journal article" date="2006" name="Mol. Cell. Proteomics">
        <title>Comprehensive identification of phosphorylation sites in postsynaptic density preparations.</title>
        <authorList>
            <person name="Trinidad J.C."/>
            <person name="Specht C.G."/>
            <person name="Thalhammer A."/>
            <person name="Schoepfer R."/>
            <person name="Burlingame A.L."/>
        </authorList>
    </citation>
    <scope>IDENTIFICATION BY MASS SPECTROMETRY [LARGE SCALE ANALYSIS]</scope>
    <source>
        <tissue>Brain</tissue>
    </source>
</reference>
<reference key="5">
    <citation type="journal article" date="2007" name="Mol. Cell. Proteomics">
        <title>Mitochondrial phosphoproteome revealed by an improved IMAC method and MS/MS/MS.</title>
        <authorList>
            <person name="Lee J."/>
            <person name="Xu Y."/>
            <person name="Chen Y."/>
            <person name="Sprung R."/>
            <person name="Kim S.C."/>
            <person name="Xie S."/>
            <person name="Zhao Y."/>
        </authorList>
    </citation>
    <scope>IDENTIFICATION BY MASS SPECTROMETRY [LARGE SCALE ANALYSIS]</scope>
    <source>
        <tissue>Liver</tissue>
    </source>
</reference>
<reference key="6">
    <citation type="journal article" date="2009" name="Immunity">
        <title>The phagosomal proteome in interferon-gamma-activated macrophages.</title>
        <authorList>
            <person name="Trost M."/>
            <person name="English L."/>
            <person name="Lemieux S."/>
            <person name="Courcelles M."/>
            <person name="Desjardins M."/>
            <person name="Thibault P."/>
        </authorList>
    </citation>
    <scope>IDENTIFICATION BY MASS SPECTROMETRY [LARGE SCALE ANALYSIS]</scope>
</reference>
<reference key="7">
    <citation type="journal article" date="2010" name="Cell">
        <title>A tissue-specific atlas of mouse protein phosphorylation and expression.</title>
        <authorList>
            <person name="Huttlin E.L."/>
            <person name="Jedrychowski M.P."/>
            <person name="Elias J.E."/>
            <person name="Goswami T."/>
            <person name="Rad R."/>
            <person name="Beausoleil S.A."/>
            <person name="Villen J."/>
            <person name="Haas W."/>
            <person name="Sowa M.E."/>
            <person name="Gygi S.P."/>
        </authorList>
    </citation>
    <scope>PHOSPHORYLATION [LARGE SCALE ANALYSIS] AT SER-356</scope>
    <scope>IDENTIFICATION BY MASS SPECTROMETRY [LARGE SCALE ANALYSIS]</scope>
    <source>
        <tissue>Brown adipose tissue</tissue>
        <tissue>Heart</tissue>
        <tissue>Kidney</tissue>
        <tissue>Lung</tissue>
        <tissue>Pancreas</tissue>
        <tissue>Spleen</tissue>
    </source>
</reference>
<reference key="8">
    <citation type="journal article" date="2012" name="Science">
        <title>Mutations in BCKD-kinase lead to a potentially treatable form of autism with epilepsy.</title>
        <authorList>
            <person name="Novarino G."/>
            <person name="El-Fishawy P."/>
            <person name="Kayserili H."/>
            <person name="Meguid N.A."/>
            <person name="Scott E.M."/>
            <person name="Schroth J."/>
            <person name="Silhavy J.L."/>
            <person name="Kara M."/>
            <person name="Khalil R.O."/>
            <person name="Ben-Omran T."/>
            <person name="Ercan-Sencicek A.G."/>
            <person name="Hashish A.F."/>
            <person name="Sanders S.J."/>
            <person name="Gupta A.R."/>
            <person name="Hashem H.S."/>
            <person name="Matern D."/>
            <person name="Gabriel S."/>
            <person name="Sweetman L."/>
            <person name="Rahimi Y."/>
            <person name="Harris R.A."/>
            <person name="State M.W."/>
            <person name="Gleeson J.G."/>
        </authorList>
    </citation>
    <scope>DISRUPTION PHENOTYPE</scope>
</reference>
<reference key="9">
    <citation type="journal article" date="2013" name="Proc. Natl. Acad. Sci. U.S.A.">
        <title>Label-free quantitative proteomics of the lysine acetylome in mitochondria identifies substrates of SIRT3 in metabolic pathways.</title>
        <authorList>
            <person name="Rardin M.J."/>
            <person name="Newman J.C."/>
            <person name="Held J.M."/>
            <person name="Cusack M.P."/>
            <person name="Sorensen D.J."/>
            <person name="Li B."/>
            <person name="Schilling B."/>
            <person name="Mooney S.D."/>
            <person name="Kahn C.R."/>
            <person name="Verdin E."/>
            <person name="Gibson B.W."/>
        </authorList>
    </citation>
    <scope>ACETYLATION [LARGE SCALE ANALYSIS] AT LYS-192</scope>
    <scope>IDENTIFICATION BY MASS SPECTROMETRY [LARGE SCALE ANALYSIS]</scope>
    <source>
        <tissue>Liver</tissue>
    </source>
</reference>
<evidence type="ECO:0000250" key="1"/>
<evidence type="ECO:0000250" key="2">
    <source>
        <dbReference type="UniProtKB" id="O14874"/>
    </source>
</evidence>
<evidence type="ECO:0000250" key="3">
    <source>
        <dbReference type="UniProtKB" id="Q00972"/>
    </source>
</evidence>
<evidence type="ECO:0000255" key="4">
    <source>
        <dbReference type="PROSITE-ProRule" id="PRU00107"/>
    </source>
</evidence>
<evidence type="ECO:0000269" key="5">
    <source>
    </source>
</evidence>
<evidence type="ECO:0000269" key="6">
    <source>
    </source>
</evidence>
<evidence type="ECO:0000305" key="7"/>
<evidence type="ECO:0007744" key="8">
    <source>
    </source>
</evidence>
<evidence type="ECO:0007744" key="9">
    <source>
    </source>
</evidence>
<organism>
    <name type="scientific">Mus musculus</name>
    <name type="common">Mouse</name>
    <dbReference type="NCBI Taxonomy" id="10090"/>
    <lineage>
        <taxon>Eukaryota</taxon>
        <taxon>Metazoa</taxon>
        <taxon>Chordata</taxon>
        <taxon>Craniata</taxon>
        <taxon>Vertebrata</taxon>
        <taxon>Euteleostomi</taxon>
        <taxon>Mammalia</taxon>
        <taxon>Eutheria</taxon>
        <taxon>Euarchontoglires</taxon>
        <taxon>Glires</taxon>
        <taxon>Rodentia</taxon>
        <taxon>Myomorpha</taxon>
        <taxon>Muroidea</taxon>
        <taxon>Muridae</taxon>
        <taxon>Murinae</taxon>
        <taxon>Mus</taxon>
        <taxon>Mus</taxon>
    </lineage>
</organism>
<sequence>MILTSVLGSGPRSWSSLWPLLGSSLSLRARSTSATDTHHVELARERSKTVTSFYNQSAIDVAAEKPSVRLTPTMMLYSGRSQDGSHLLKSGRYLQQELPVRIAHRIKGFRSLPFIIGCNPTILHVHELYIRAFQKLTDFPPIKDQADEAQYCQLVRQLLDDHKDVVTLLAEGLRESRKHIQDEKLVRYFLDKTLTSRLGIRMLATHHLALHEDKPDFVGIICTRLSPKKIIEKWVDFARRLCEHKYGNAPRVRINGHVAARFPFIPMPLDYILPELLKNAMRATMESHLDTPYNVPDVVITIANNDIDLIIRISDRGGGIAHKDLDRVMDYHFTTAEASTQDPRINPLFGHLDMHSGGQSGPMHGFGFGLPTSRAYAEYLGGSLQLQSLQGIGTDVYLRLRHIDGREESFRI</sequence>
<feature type="transit peptide" description="Mitochondrion" evidence="1">
    <location>
        <begin position="1"/>
        <end position="30"/>
    </location>
</feature>
<feature type="chain" id="PRO_0000023453" description="Branched-chain alpha-ketoacid dehydrogenase kinase">
    <location>
        <begin position="31"/>
        <end position="412"/>
    </location>
</feature>
<feature type="domain" description="Histidine kinase" evidence="4">
    <location>
        <begin position="159"/>
        <end position="404"/>
    </location>
</feature>
<feature type="binding site" evidence="2">
    <location>
        <position position="279"/>
    </location>
    <ligand>
        <name>ATP</name>
        <dbReference type="ChEBI" id="CHEBI:30616"/>
    </ligand>
</feature>
<feature type="binding site" evidence="2">
    <location>
        <position position="279"/>
    </location>
    <ligand>
        <name>Mg(2+)</name>
        <dbReference type="ChEBI" id="CHEBI:18420"/>
        <note>structural</note>
    </ligand>
</feature>
<feature type="binding site" evidence="2">
    <location>
        <position position="315"/>
    </location>
    <ligand>
        <name>ATP</name>
        <dbReference type="ChEBI" id="CHEBI:30616"/>
    </ligand>
</feature>
<feature type="binding site" evidence="2">
    <location>
        <position position="328"/>
    </location>
    <ligand>
        <name>K(+)</name>
        <dbReference type="ChEBI" id="CHEBI:29103"/>
        <note>structural</note>
    </ligand>
</feature>
<feature type="binding site" evidence="2">
    <location>
        <position position="330"/>
    </location>
    <ligand>
        <name>K(+)</name>
        <dbReference type="ChEBI" id="CHEBI:29103"/>
        <note>structural</note>
    </ligand>
</feature>
<feature type="binding site" evidence="2">
    <location>
        <position position="333"/>
    </location>
    <ligand>
        <name>K(+)</name>
        <dbReference type="ChEBI" id="CHEBI:29103"/>
        <note>structural</note>
    </ligand>
</feature>
<feature type="binding site" evidence="2">
    <location>
        <position position="334"/>
    </location>
    <ligand>
        <name>ATP</name>
        <dbReference type="ChEBI" id="CHEBI:30616"/>
    </ligand>
</feature>
<feature type="binding site" evidence="2">
    <location>
        <position position="335"/>
    </location>
    <ligand>
        <name>ATP</name>
        <dbReference type="ChEBI" id="CHEBI:30616"/>
    </ligand>
</feature>
<feature type="binding site" evidence="2">
    <location>
        <position position="364"/>
    </location>
    <ligand>
        <name>ATP</name>
        <dbReference type="ChEBI" id="CHEBI:30616"/>
    </ligand>
</feature>
<feature type="binding site" evidence="2">
    <location>
        <position position="367"/>
    </location>
    <ligand>
        <name>ATP</name>
        <dbReference type="ChEBI" id="CHEBI:30616"/>
    </ligand>
</feature>
<feature type="binding site" evidence="2">
    <location>
        <position position="367"/>
    </location>
    <ligand>
        <name>K(+)</name>
        <dbReference type="ChEBI" id="CHEBI:29103"/>
        <note>structural</note>
    </ligand>
</feature>
<feature type="binding site" evidence="2">
    <location>
        <position position="370"/>
    </location>
    <ligand>
        <name>ATP</name>
        <dbReference type="ChEBI" id="CHEBI:30616"/>
    </ligand>
</feature>
<feature type="modified residue" description="Phosphoserine" evidence="3">
    <location>
        <position position="31"/>
    </location>
</feature>
<feature type="modified residue" description="Phosphoserine; by autocatalysis" evidence="1">
    <location>
        <position position="52"/>
    </location>
</feature>
<feature type="modified residue" description="N6-acetyllysine" evidence="9">
    <location>
        <position position="192"/>
    </location>
</feature>
<feature type="modified residue" description="N6-acetyllysine" evidence="2">
    <location>
        <position position="233"/>
    </location>
</feature>
<feature type="modified residue" description="Phosphoserine" evidence="8">
    <location>
        <position position="356"/>
    </location>
</feature>
<feature type="modified residue" description="Phosphoserine" evidence="3">
    <location>
        <position position="360"/>
    </location>
</feature>
<name>BCKD_MOUSE</name>